<keyword id="KW-0002">3D-structure</keyword>
<keyword id="KW-0903">Direct protein sequencing</keyword>
<keyword id="KW-0472">Membrane</keyword>
<keyword id="KW-0496">Mitochondrion</keyword>
<keyword id="KW-0999">Mitochondrion inner membrane</keyword>
<keyword id="KW-1185">Reference proteome</keyword>
<keyword id="KW-0809">Transit peptide</keyword>
<keyword id="KW-0812">Transmembrane</keyword>
<keyword id="KW-1133">Transmembrane helix</keyword>
<evidence type="ECO:0000250" key="1">
    <source>
        <dbReference type="UniProtKB" id="P24311"/>
    </source>
</evidence>
<evidence type="ECO:0000269" key="2">
    <source>
    </source>
</evidence>
<evidence type="ECO:0000269" key="3">
    <source>
    </source>
</evidence>
<evidence type="ECO:0000269" key="4">
    <source>
    </source>
</evidence>
<evidence type="ECO:0000269" key="5">
    <source>
    </source>
</evidence>
<evidence type="ECO:0000269" key="6">
    <source>
    </source>
</evidence>
<evidence type="ECO:0000269" key="7">
    <source>
    </source>
</evidence>
<evidence type="ECO:0000305" key="8"/>
<evidence type="ECO:0000305" key="9">
    <source>
    </source>
</evidence>
<evidence type="ECO:0007829" key="10">
    <source>
        <dbReference type="PDB" id="7COH"/>
    </source>
</evidence>
<accession>P13183</accession>
<accession>Q3SZ39</accession>
<comment type="function">
    <text evidence="1 3">Component of the cytochrome c oxidase, the last enzyme in the mitochondrial electron transport chain which drives oxidative phosphorylation. The respiratory chain contains 3 multisubunit complexes succinate dehydrogenase (complex II, CII), ubiquinol-cytochrome c oxidoreductase (cytochrome b-c1 complex, complex III, CIII) and cytochrome c oxidase (complex IV, CIV), that cooperate to transfer electrons derived from NADH and succinate to molecular oxygen, creating an electrochemical gradient over the inner membrane that drives transmembrane transport and the ATP synthase. Cytochrome c oxidase is the component of the respiratory chain that catalyzes the reduction of oxygen to water. Electrons originating from reduced cytochrome c in the intermembrane space (IMS) are transferred via the dinuclear copper A center (CU(A)) of subunit 2 and heme A of subunit 1 to the active site in subunit 1, a binuclear center (BNC) formed by heme A3 and copper B (CU(B)). The BNC reduces molecular oxygen to 2 water molecules using 4 electrons from cytochrome c in the IMS and 4 protons from the mitochondrial matrix (PubMed:27605664). Plays a role in proper central nervous system (CNS) development in vertebrates (By similarity).</text>
</comment>
<comment type="pathway">
    <text evidence="9">Energy metabolism; oxidative phosphorylation.</text>
</comment>
<comment type="subunit">
    <text evidence="2 4 7">Component of the cytochrome c oxidase (complex IV, CIV), a multisubunit enzyme composed of 14 subunits. The complex is composed of a catalytic core of 3 subunits MT-CO1, MT-CO2 and MT-CO3, encoded in the mitochondrial DNA, and 11 supernumerary subunits COX4I1 (or COX4I2), COX5A, COX5B, COX6A2 (or COX6A1), COX6B1 (or COX6B2), COX6C, COX7A1 (or COX7A2), COX7B, COX7C, COX8B and NDUFA4, which are encoded in the nuclear genome (PubMed:8638158). The complex exists as a monomer or a dimer and forms supercomplexes (SCs) in the inner mitochondrial membrane with NADH-ubiquinone oxidoreductase (complex I, CI) and ubiquinol-cytochrome c oxidoreductase (cytochrome b-c1 complex, complex III, CIII), resulting in different assemblies (supercomplex SCI(1)III(2)IV(1) and megacomplex MCI(2)III(2)IV(2)) (PubMed:26698328, PubMed:27830641).</text>
</comment>
<comment type="subcellular location">
    <subcellularLocation>
        <location evidence="3 6">Mitochondrion inner membrane</location>
        <topology evidence="3 6">Single-pass membrane protein</topology>
    </subcellularLocation>
</comment>
<comment type="similarity">
    <text evidence="8">Belongs to the cytochrome c oxidase VIIb family.</text>
</comment>
<comment type="sequence caution" evidence="8">
    <conflict type="erroneous initiation">
        <sequence resource="EMBL-CDS" id="AAA30489"/>
    </conflict>
    <text>Extended N-terminus.</text>
</comment>
<comment type="sequence caution" evidence="8">
    <conflict type="erroneous initiation">
        <sequence resource="EMBL-CDS" id="AAI03175"/>
    </conflict>
    <text>Extended N-terminus.</text>
</comment>
<name>COX7B_BOVIN</name>
<protein>
    <recommendedName>
        <fullName>Cytochrome c oxidase subunit 7B, mitochondrial</fullName>
    </recommendedName>
    <alternativeName>
        <fullName>Cytochrome c oxidase polypeptide VIIb</fullName>
    </alternativeName>
    <alternativeName>
        <fullName>IHQ</fullName>
    </alternativeName>
</protein>
<reference key="1">
    <citation type="journal article" date="1989" name="J. Biol. Chem.">
        <title>Cloning and sequencing of the cDNA for a 13th different subunit (IHQ) of beef heart cytochrome c oxidase.</title>
        <authorList>
            <person name="Lightowlers R.N."/>
            <person name="Takamiya S."/>
            <person name="Wessling R."/>
            <person name="Lindorfer M."/>
            <person name="Capaldi R.A."/>
        </authorList>
    </citation>
    <scope>NUCLEOTIDE SEQUENCE [MRNA]</scope>
</reference>
<reference key="2">
    <citation type="submission" date="2005-08" db="EMBL/GenBank/DDBJ databases">
        <authorList>
            <consortium name="NIH - Mammalian Gene Collection (MGC) project"/>
        </authorList>
    </citation>
    <scope>NUCLEOTIDE SEQUENCE [LARGE SCALE MRNA]</scope>
    <source>
        <strain>Hereford</strain>
        <tissue>Hypothalamus</tissue>
    </source>
</reference>
<reference key="3">
    <citation type="journal article" date="1988" name="Biochemistry">
        <title>Tissue-specific differences between heart and liver cytochrome c oxidase.</title>
        <authorList>
            <person name="Yanamura W."/>
            <person name="Zhang Y.-Z."/>
            <person name="Takamiya S."/>
            <person name="Capaldi R.A."/>
        </authorList>
    </citation>
    <scope>PROTEIN SEQUENCE OF 25-46</scope>
</reference>
<reference key="4">
    <citation type="journal article" date="2016" name="J. Biol. Chem.">
        <title>Purification of active respiratory supercomplex from bovine heart mitochondria enables functional studies.</title>
        <authorList>
            <person name="Shinzawa-Itoh K."/>
            <person name="Shimomura H."/>
            <person name="Yanagisawa S."/>
            <person name="Shimada S."/>
            <person name="Takahashi R."/>
            <person name="Oosaki M."/>
            <person name="Ogura T."/>
            <person name="Tsukihara T."/>
        </authorList>
    </citation>
    <scope>SUBUNIT</scope>
</reference>
<reference key="5">
    <citation type="journal article" date="1996" name="Science">
        <title>The whole structure of the 13-subunit oxidized cytochrome c oxidase at 2.8 A.</title>
        <authorList>
            <person name="Tsukihara T."/>
            <person name="Aoyama H."/>
            <person name="Yamashita E."/>
            <person name="Tomizaki T."/>
            <person name="Yamaguchi H."/>
            <person name="Shinzawa-Itoh K."/>
            <person name="Nakashima R."/>
            <person name="Yaono R."/>
            <person name="Yoshikawa S."/>
        </authorList>
    </citation>
    <scope>X-RAY CRYSTALLOGRAPHY (2.8 ANGSTROMS)</scope>
</reference>
<reference key="6">
    <citation type="journal article" date="1999" name="Acta Crystallogr. D">
        <title>Structure analysis of bovine heart cytochrome c oxidase at 2.8 A resolution.</title>
        <authorList>
            <person name="Tomizaki T."/>
            <person name="Yamashita E."/>
            <person name="Yamaguchi H."/>
            <person name="Aoyama H."/>
            <person name="Tsukihara T."/>
            <person name="Shinzawa-Itoh K."/>
            <person name="Nakashima R."/>
            <person name="Yaono R."/>
            <person name="Yoshikawa S."/>
        </authorList>
    </citation>
    <scope>X-RAY CRYSTALLOGRAPHY (2.8 ANGSTROMS)</scope>
    <source>
        <tissue>Heart</tissue>
    </source>
</reference>
<reference key="7">
    <citation type="journal article" date="2000" name="Acta Crystallogr. D">
        <title>X-ray structure of azide-bound fully oxidized cytochrome c oxidase from bovine heart at 2.9 A resolution.</title>
        <authorList>
            <person name="Fei M.J."/>
            <person name="Yamashita E."/>
            <person name="Inoue N."/>
            <person name="Yao M."/>
            <person name="Yamaguchi H."/>
            <person name="Tsukihara T."/>
            <person name="Shinzawa-Itoh K."/>
            <person name="Nakashima R."/>
            <person name="Yoshikawa S."/>
        </authorList>
    </citation>
    <scope>X-RAY CRYSTALLOGRAPHY (2.9 ANGSTROMS)</scope>
    <source>
        <tissue>Heart</tissue>
    </source>
</reference>
<reference key="8">
    <citation type="journal article" date="2010" name="Proc. Natl. Acad. Sci. U.S.A.">
        <title>Bovine cytochrome c oxidase structures enable O2 reduction with minimization of reactive oxygens and provide a proton-pumping gate.</title>
        <authorList>
            <person name="Muramoto K."/>
            <person name="Ohta K."/>
            <person name="Shinzawa-Itoh K."/>
            <person name="Kanda K."/>
            <person name="Taniguchi M."/>
            <person name="Nabekura H."/>
            <person name="Yamashita E."/>
            <person name="Tsukihara T."/>
            <person name="Yoshikawa S."/>
        </authorList>
    </citation>
    <scope>X-RAY CRYSTALLOGRAPHY (1.80 ANGSTROMS)</scope>
</reference>
<reference key="9">
    <citation type="journal article" date="2016" name="Elife">
        <title>Functional asymmetry and electron flow in the bovine respirasome.</title>
        <authorList>
            <person name="Sousa J.S."/>
            <person name="Mills D.J."/>
            <person name="Vonck J."/>
            <person name="Kuehlbrandt W."/>
        </authorList>
    </citation>
    <scope>STRUCTURE BY ELECTRON MICROSCOPY (9.10 ANGSTROMS)</scope>
</reference>
<reference key="10">
    <citation type="journal article" date="2016" name="J. Biol. Chem.">
        <title>The Mg2+-containing water cluster of mammalian cytochrome c oxidase collects four pumping proton equivalents in each catalytic cycle.</title>
        <authorList>
            <person name="Yano N."/>
            <person name="Muramoto K."/>
            <person name="Shimada A."/>
            <person name="Takemura S."/>
            <person name="Baba J."/>
            <person name="Fujisawa H."/>
            <person name="Mochizuki M."/>
            <person name="Shinzawa-Itoh K."/>
            <person name="Yamashita E."/>
            <person name="Tsukihara T."/>
            <person name="Yoshikawa S."/>
        </authorList>
    </citation>
    <scope>X-RAY CRYSTALLOGRAPHY (1.50 ANGSTROMS)</scope>
</reference>
<reference key="11">
    <citation type="journal article" date="2019" name="Proc. Natl. Acad. Sci. U.S.A.">
        <title>Monomeric structure of an active form of bovine cytochrome c oxidase.</title>
        <authorList>
            <person name="Shinzawa-Itoh K."/>
            <person name="Sugimura T."/>
            <person name="Misaki T."/>
            <person name="Tadehara Y."/>
            <person name="Yamamoto S."/>
            <person name="Hanada M."/>
            <person name="Yano N."/>
            <person name="Nakagawa T."/>
            <person name="Uene S."/>
            <person name="Yamada T."/>
            <person name="Aoyama H."/>
            <person name="Yamashita E."/>
            <person name="Tsukihara T."/>
            <person name="Yoshikawa S."/>
            <person name="Muramoto K."/>
        </authorList>
    </citation>
    <scope>X-RAY CRYSTALLOGRAPHY (1.85 ANGSTROMS)</scope>
</reference>
<organism>
    <name type="scientific">Bos taurus</name>
    <name type="common">Bovine</name>
    <dbReference type="NCBI Taxonomy" id="9913"/>
    <lineage>
        <taxon>Eukaryota</taxon>
        <taxon>Metazoa</taxon>
        <taxon>Chordata</taxon>
        <taxon>Craniata</taxon>
        <taxon>Vertebrata</taxon>
        <taxon>Euteleostomi</taxon>
        <taxon>Mammalia</taxon>
        <taxon>Eutheria</taxon>
        <taxon>Laurasiatheria</taxon>
        <taxon>Artiodactyla</taxon>
        <taxon>Ruminantia</taxon>
        <taxon>Pecora</taxon>
        <taxon>Bovidae</taxon>
        <taxon>Bovinae</taxon>
        <taxon>Bos</taxon>
    </lineage>
</organism>
<feature type="transit peptide" description="Mitochondrion" evidence="5">
    <location>
        <begin position="1"/>
        <end position="24"/>
    </location>
</feature>
<feature type="chain" id="PRO_0000006157" description="Cytochrome c oxidase subunit 7B, mitochondrial">
    <location>
        <begin position="25"/>
        <end position="80"/>
    </location>
</feature>
<feature type="topological domain" description="Mitochondrial matrix" evidence="3">
    <location>
        <begin position="25"/>
        <end position="32"/>
    </location>
</feature>
<feature type="transmembrane region" description="Helical" evidence="3">
    <location>
        <begin position="33"/>
        <end position="59"/>
    </location>
</feature>
<feature type="topological domain" description="Mitochondrial intermembrane" evidence="3">
    <location>
        <begin position="60"/>
        <end position="80"/>
    </location>
</feature>
<feature type="sequence conflict" description="In Ref. 1; AAA30489." evidence="8" ref="1">
    <original>V</original>
    <variation>VQAV</variation>
    <location>
        <position position="21"/>
    </location>
</feature>
<feature type="helix" evidence="10">
    <location>
        <begin position="33"/>
        <end position="59"/>
    </location>
</feature>
<feature type="turn" evidence="10">
    <location>
        <begin position="69"/>
        <end position="71"/>
    </location>
</feature>
<sequence>MFPLAKNALSRLRVQSIQQAVARQIHQKRAPDFHDKYGNAVLASGATFCVAVWVYMATQIGIEWNPSPVGRVTPKEWREQ</sequence>
<gene>
    <name type="primary">COX7B</name>
</gene>
<proteinExistence type="evidence at protein level"/>
<dbReference type="EMBL" id="J05058">
    <property type="protein sequence ID" value="AAA30489.1"/>
    <property type="status" value="ALT_INIT"/>
    <property type="molecule type" value="mRNA"/>
</dbReference>
<dbReference type="EMBL" id="BC103174">
    <property type="protein sequence ID" value="AAI03175.1"/>
    <property type="status" value="ALT_INIT"/>
    <property type="molecule type" value="mRNA"/>
</dbReference>
<dbReference type="PIR" id="A34410">
    <property type="entry name" value="OSBO7B"/>
</dbReference>
<dbReference type="RefSeq" id="NP_786989.3">
    <property type="nucleotide sequence ID" value="NM_175795.3"/>
</dbReference>
<dbReference type="PDB" id="1OCC">
    <property type="method" value="X-ray"/>
    <property type="resolution" value="2.80 A"/>
    <property type="chains" value="K/X=25-80"/>
</dbReference>
<dbReference type="PDB" id="1OCO">
    <property type="method" value="X-ray"/>
    <property type="resolution" value="2.80 A"/>
    <property type="chains" value="K/X=25-80"/>
</dbReference>
<dbReference type="PDB" id="1OCR">
    <property type="method" value="X-ray"/>
    <property type="resolution" value="2.35 A"/>
    <property type="chains" value="K/X=25-80"/>
</dbReference>
<dbReference type="PDB" id="1OCZ">
    <property type="method" value="X-ray"/>
    <property type="resolution" value="2.90 A"/>
    <property type="chains" value="K/X=25-80"/>
</dbReference>
<dbReference type="PDB" id="1V54">
    <property type="method" value="X-ray"/>
    <property type="resolution" value="1.80 A"/>
    <property type="chains" value="K/X=25-80"/>
</dbReference>
<dbReference type="PDB" id="1V55">
    <property type="method" value="X-ray"/>
    <property type="resolution" value="1.90 A"/>
    <property type="chains" value="K/X=25-80"/>
</dbReference>
<dbReference type="PDB" id="2DYR">
    <property type="method" value="X-ray"/>
    <property type="resolution" value="1.80 A"/>
    <property type="chains" value="K/X=25-80"/>
</dbReference>
<dbReference type="PDB" id="2DYS">
    <property type="method" value="X-ray"/>
    <property type="resolution" value="2.20 A"/>
    <property type="chains" value="K/X=25-80"/>
</dbReference>
<dbReference type="PDB" id="2EIJ">
    <property type="method" value="X-ray"/>
    <property type="resolution" value="1.90 A"/>
    <property type="chains" value="K/X=25-80"/>
</dbReference>
<dbReference type="PDB" id="2EIK">
    <property type="method" value="X-ray"/>
    <property type="resolution" value="2.10 A"/>
    <property type="chains" value="K/X=25-80"/>
</dbReference>
<dbReference type="PDB" id="2EIL">
    <property type="method" value="X-ray"/>
    <property type="resolution" value="2.10 A"/>
    <property type="chains" value="K/X=25-80"/>
</dbReference>
<dbReference type="PDB" id="2EIM">
    <property type="method" value="X-ray"/>
    <property type="resolution" value="2.60 A"/>
    <property type="chains" value="K/X=25-80"/>
</dbReference>
<dbReference type="PDB" id="2EIN">
    <property type="method" value="X-ray"/>
    <property type="resolution" value="2.70 A"/>
    <property type="chains" value="K/X=25-80"/>
</dbReference>
<dbReference type="PDB" id="2OCC">
    <property type="method" value="X-ray"/>
    <property type="resolution" value="2.30 A"/>
    <property type="chains" value="K/X=25-80"/>
</dbReference>
<dbReference type="PDB" id="2Y69">
    <property type="method" value="X-ray"/>
    <property type="resolution" value="1.95 A"/>
    <property type="chains" value="K/X=1-80"/>
</dbReference>
<dbReference type="PDB" id="2YBB">
    <property type="method" value="EM"/>
    <property type="resolution" value="19.00 A"/>
    <property type="chains" value="V=25-80"/>
</dbReference>
<dbReference type="PDB" id="2ZXW">
    <property type="method" value="X-ray"/>
    <property type="resolution" value="2.50 A"/>
    <property type="chains" value="K/X=25-80"/>
</dbReference>
<dbReference type="PDB" id="3ABK">
    <property type="method" value="X-ray"/>
    <property type="resolution" value="2.00 A"/>
    <property type="chains" value="K/X=25-80"/>
</dbReference>
<dbReference type="PDB" id="3ABL">
    <property type="method" value="X-ray"/>
    <property type="resolution" value="2.10 A"/>
    <property type="chains" value="K/X=25-80"/>
</dbReference>
<dbReference type="PDB" id="3ABM">
    <property type="method" value="X-ray"/>
    <property type="resolution" value="1.95 A"/>
    <property type="chains" value="K/X=25-80"/>
</dbReference>
<dbReference type="PDB" id="3AG1">
    <property type="method" value="X-ray"/>
    <property type="resolution" value="2.20 A"/>
    <property type="chains" value="K/X=25-80"/>
</dbReference>
<dbReference type="PDB" id="3AG2">
    <property type="method" value="X-ray"/>
    <property type="resolution" value="1.80 A"/>
    <property type="chains" value="K/X=25-80"/>
</dbReference>
<dbReference type="PDB" id="3AG3">
    <property type="method" value="X-ray"/>
    <property type="resolution" value="1.80 A"/>
    <property type="chains" value="K/X=25-80"/>
</dbReference>
<dbReference type="PDB" id="3AG4">
    <property type="method" value="X-ray"/>
    <property type="resolution" value="2.05 A"/>
    <property type="chains" value="K/X=25-80"/>
</dbReference>
<dbReference type="PDB" id="3ASN">
    <property type="method" value="X-ray"/>
    <property type="resolution" value="3.00 A"/>
    <property type="chains" value="K/X=25-80"/>
</dbReference>
<dbReference type="PDB" id="3ASO">
    <property type="method" value="X-ray"/>
    <property type="resolution" value="2.30 A"/>
    <property type="chains" value="K/X=25-80"/>
</dbReference>
<dbReference type="PDB" id="3WG7">
    <property type="method" value="X-ray"/>
    <property type="resolution" value="1.90 A"/>
    <property type="chains" value="K/X=25-80"/>
</dbReference>
<dbReference type="PDB" id="3X2Q">
    <property type="method" value="X-ray"/>
    <property type="resolution" value="2.00 A"/>
    <property type="chains" value="K/X=25-80"/>
</dbReference>
<dbReference type="PDB" id="5B1A">
    <property type="method" value="X-ray"/>
    <property type="resolution" value="1.50 A"/>
    <property type="chains" value="K/X=25-80"/>
</dbReference>
<dbReference type="PDB" id="5B1B">
    <property type="method" value="X-ray"/>
    <property type="resolution" value="1.60 A"/>
    <property type="chains" value="K/X=25-80"/>
</dbReference>
<dbReference type="PDB" id="5B3S">
    <property type="method" value="X-ray"/>
    <property type="resolution" value="1.68 A"/>
    <property type="chains" value="K/X=25-80"/>
</dbReference>
<dbReference type="PDB" id="5GPN">
    <property type="method" value="EM"/>
    <property type="resolution" value="5.40 A"/>
    <property type="chains" value="8=25-80"/>
</dbReference>
<dbReference type="PDB" id="5IY5">
    <property type="method" value="X-ray"/>
    <property type="resolution" value="2.00 A"/>
    <property type="chains" value="K/X=30-78"/>
</dbReference>
<dbReference type="PDB" id="5LUF">
    <property type="method" value="EM"/>
    <property type="resolution" value="9.10 A"/>
    <property type="chains" value="8=25-80"/>
</dbReference>
<dbReference type="PDB" id="5W97">
    <property type="method" value="X-ray"/>
    <property type="resolution" value="2.30 A"/>
    <property type="chains" value="K/k=25-80"/>
</dbReference>
<dbReference type="PDB" id="5WAU">
    <property type="method" value="X-ray"/>
    <property type="resolution" value="1.95 A"/>
    <property type="chains" value="K/k=25-80"/>
</dbReference>
<dbReference type="PDB" id="5X19">
    <property type="method" value="X-ray"/>
    <property type="resolution" value="2.20 A"/>
    <property type="chains" value="K/X=25-80"/>
</dbReference>
<dbReference type="PDB" id="5X1B">
    <property type="method" value="X-ray"/>
    <property type="resolution" value="2.40 A"/>
    <property type="chains" value="K/X=25-80"/>
</dbReference>
<dbReference type="PDB" id="5X1F">
    <property type="method" value="X-ray"/>
    <property type="resolution" value="2.20 A"/>
    <property type="chains" value="K/X=25-80"/>
</dbReference>
<dbReference type="PDB" id="5XDQ">
    <property type="method" value="X-ray"/>
    <property type="resolution" value="1.77 A"/>
    <property type="chains" value="K/X=25-80"/>
</dbReference>
<dbReference type="PDB" id="5XDX">
    <property type="method" value="X-ray"/>
    <property type="resolution" value="1.99 A"/>
    <property type="chains" value="K/X=25-80"/>
</dbReference>
<dbReference type="PDB" id="5XTH">
    <property type="method" value="EM"/>
    <property type="resolution" value="3.90 A"/>
    <property type="chains" value="7=30-78"/>
</dbReference>
<dbReference type="PDB" id="5XTI">
    <property type="method" value="EM"/>
    <property type="resolution" value="17.40 A"/>
    <property type="chains" value="7/B7=30-78"/>
</dbReference>
<dbReference type="PDB" id="5Z84">
    <property type="method" value="X-ray"/>
    <property type="resolution" value="1.85 A"/>
    <property type="chains" value="K/X=25-80"/>
</dbReference>
<dbReference type="PDB" id="5Z85">
    <property type="method" value="X-ray"/>
    <property type="resolution" value="1.85 A"/>
    <property type="chains" value="K/X=25-80"/>
</dbReference>
<dbReference type="PDB" id="5Z86">
    <property type="method" value="X-ray"/>
    <property type="resolution" value="1.85 A"/>
    <property type="chains" value="K/X=25-80"/>
</dbReference>
<dbReference type="PDB" id="5ZCO">
    <property type="method" value="X-ray"/>
    <property type="resolution" value="1.90 A"/>
    <property type="chains" value="K/X=25-80"/>
</dbReference>
<dbReference type="PDB" id="5ZCP">
    <property type="method" value="X-ray"/>
    <property type="resolution" value="1.65 A"/>
    <property type="chains" value="K/X=25-80"/>
</dbReference>
<dbReference type="PDB" id="5ZCQ">
    <property type="method" value="X-ray"/>
    <property type="resolution" value="1.65 A"/>
    <property type="chains" value="K/X=25-80"/>
</dbReference>
<dbReference type="PDB" id="6J8M">
    <property type="method" value="X-ray"/>
    <property type="resolution" value="1.90 A"/>
    <property type="chains" value="K/X=25-80"/>
</dbReference>
<dbReference type="PDB" id="6JUW">
    <property type="method" value="X-ray"/>
    <property type="resolution" value="1.80 A"/>
    <property type="chains" value="K/X=30-78"/>
</dbReference>
<dbReference type="PDB" id="6JY3">
    <property type="method" value="X-ray"/>
    <property type="resolution" value="1.85 A"/>
    <property type="chains" value="K=25-80"/>
</dbReference>
<dbReference type="PDB" id="6JY4">
    <property type="method" value="X-ray"/>
    <property type="resolution" value="1.95 A"/>
    <property type="chains" value="K=25-80"/>
</dbReference>
<dbReference type="PDB" id="6NKN">
    <property type="method" value="X-ray"/>
    <property type="resolution" value="2.50 A"/>
    <property type="chains" value="K/X=25-80"/>
</dbReference>
<dbReference type="PDB" id="6NMF">
    <property type="method" value="X-ray"/>
    <property type="resolution" value="2.80 A"/>
    <property type="chains" value="K/X=25-80"/>
</dbReference>
<dbReference type="PDB" id="6NMP">
    <property type="method" value="X-ray"/>
    <property type="resolution" value="2.90 A"/>
    <property type="chains" value="K/X=25-80"/>
</dbReference>
<dbReference type="PDB" id="7COH">
    <property type="method" value="X-ray"/>
    <property type="resolution" value="1.30 A"/>
    <property type="chains" value="K/X=25-80"/>
</dbReference>
<dbReference type="PDB" id="7CP5">
    <property type="method" value="X-ray"/>
    <property type="resolution" value="1.76 A"/>
    <property type="chains" value="K/X=30-78"/>
</dbReference>
<dbReference type="PDB" id="7D5W">
    <property type="method" value="X-ray"/>
    <property type="resolution" value="1.84 A"/>
    <property type="chains" value="K/X=30-78"/>
</dbReference>
<dbReference type="PDB" id="7D5X">
    <property type="method" value="X-ray"/>
    <property type="resolution" value="1.74 A"/>
    <property type="chains" value="K/X=30-78"/>
</dbReference>
<dbReference type="PDB" id="7DGQ">
    <property type="method" value="EM"/>
    <property type="resolution" value="5.00 A"/>
    <property type="chains" value="B3=1-80"/>
</dbReference>
<dbReference type="PDB" id="7DGR">
    <property type="method" value="EM"/>
    <property type="resolution" value="4.60 A"/>
    <property type="chains" value="B0=1-80"/>
</dbReference>
<dbReference type="PDB" id="7DGS">
    <property type="method" value="EM"/>
    <property type="resolution" value="7.80 A"/>
    <property type="chains" value="B0=1-80"/>
</dbReference>
<dbReference type="PDB" id="7DKF">
    <property type="method" value="EM"/>
    <property type="resolution" value="8.30 A"/>
    <property type="chains" value="K3=1-80"/>
</dbReference>
<dbReference type="PDB" id="7EV7">
    <property type="method" value="X-ray"/>
    <property type="resolution" value="1.70 A"/>
    <property type="chains" value="K/X=25-80"/>
</dbReference>
<dbReference type="PDB" id="7THU">
    <property type="method" value="X-ray"/>
    <property type="resolution" value="1.93 A"/>
    <property type="chains" value="KKK/XXX=25-80"/>
</dbReference>
<dbReference type="PDB" id="7TIE">
    <property type="method" value="X-ray"/>
    <property type="resolution" value="1.90 A"/>
    <property type="chains" value="KKK/XXX=25-80"/>
</dbReference>
<dbReference type="PDB" id="7TIH">
    <property type="method" value="X-ray"/>
    <property type="resolution" value="2.35 A"/>
    <property type="chains" value="KKK/XXX=25-80"/>
</dbReference>
<dbReference type="PDB" id="7TII">
    <property type="method" value="X-ray"/>
    <property type="resolution" value="2.45 A"/>
    <property type="chains" value="KKK/XXX=25-80"/>
</dbReference>
<dbReference type="PDB" id="7VUW">
    <property type="method" value="X-ray"/>
    <property type="resolution" value="1.60 A"/>
    <property type="chains" value="K/X=30-78"/>
</dbReference>
<dbReference type="PDB" id="7VVR">
    <property type="method" value="X-ray"/>
    <property type="resolution" value="1.65 A"/>
    <property type="chains" value="K/X=30-78"/>
</dbReference>
<dbReference type="PDB" id="7W3E">
    <property type="method" value="X-ray"/>
    <property type="resolution" value="1.45 A"/>
    <property type="chains" value="K/X=30-78"/>
</dbReference>
<dbReference type="PDB" id="7XMA">
    <property type="method" value="X-ray"/>
    <property type="resolution" value="2.20 A"/>
    <property type="chains" value="K/X=25-80"/>
</dbReference>
<dbReference type="PDB" id="7XMB">
    <property type="method" value="X-ray"/>
    <property type="resolution" value="2.20 A"/>
    <property type="chains" value="K/X=25-80"/>
</dbReference>
<dbReference type="PDB" id="7Y44">
    <property type="method" value="X-ray"/>
    <property type="resolution" value="1.90 A"/>
    <property type="chains" value="K/X=25-80"/>
</dbReference>
<dbReference type="PDB" id="7YPY">
    <property type="method" value="X-ray"/>
    <property type="resolution" value="1.50 A"/>
    <property type="chains" value="K/X=25-80"/>
</dbReference>
<dbReference type="PDB" id="8D4T">
    <property type="method" value="EM"/>
    <property type="resolution" value="3.10 A"/>
    <property type="chains" value="X=32-78"/>
</dbReference>
<dbReference type="PDB" id="8GBT">
    <property type="method" value="X-ray"/>
    <property type="resolution" value="2.80 A"/>
    <property type="chains" value="K/X=25-80"/>
</dbReference>
<dbReference type="PDB" id="8GCQ">
    <property type="method" value="X-ray"/>
    <property type="resolution" value="2.38 A"/>
    <property type="chains" value="K/X=25-80"/>
</dbReference>
<dbReference type="PDB" id="8GVM">
    <property type="method" value="X-ray"/>
    <property type="resolution" value="1.85 A"/>
    <property type="chains" value="K/X=25-80"/>
</dbReference>
<dbReference type="PDB" id="8H8R">
    <property type="method" value="X-ray"/>
    <property type="resolution" value="1.70 A"/>
    <property type="chains" value="K/X=25-80"/>
</dbReference>
<dbReference type="PDB" id="8H8S">
    <property type="method" value="X-ray"/>
    <property type="resolution" value="1.70 A"/>
    <property type="chains" value="K/X=25-80"/>
</dbReference>
<dbReference type="PDB" id="8IJN">
    <property type="method" value="X-ray"/>
    <property type="resolution" value="1.80 A"/>
    <property type="chains" value="K/X=25-80"/>
</dbReference>
<dbReference type="PDBsum" id="1OCC"/>
<dbReference type="PDBsum" id="1OCO"/>
<dbReference type="PDBsum" id="1OCR"/>
<dbReference type="PDBsum" id="1OCZ"/>
<dbReference type="PDBsum" id="1V54"/>
<dbReference type="PDBsum" id="1V55"/>
<dbReference type="PDBsum" id="2DYR"/>
<dbReference type="PDBsum" id="2DYS"/>
<dbReference type="PDBsum" id="2EIJ"/>
<dbReference type="PDBsum" id="2EIK"/>
<dbReference type="PDBsum" id="2EIL"/>
<dbReference type="PDBsum" id="2EIM"/>
<dbReference type="PDBsum" id="2EIN"/>
<dbReference type="PDBsum" id="2OCC"/>
<dbReference type="PDBsum" id="2Y69"/>
<dbReference type="PDBsum" id="2YBB"/>
<dbReference type="PDBsum" id="2ZXW"/>
<dbReference type="PDBsum" id="3ABK"/>
<dbReference type="PDBsum" id="3ABL"/>
<dbReference type="PDBsum" id="3ABM"/>
<dbReference type="PDBsum" id="3AG1"/>
<dbReference type="PDBsum" id="3AG2"/>
<dbReference type="PDBsum" id="3AG3"/>
<dbReference type="PDBsum" id="3AG4"/>
<dbReference type="PDBsum" id="3ASN"/>
<dbReference type="PDBsum" id="3ASO"/>
<dbReference type="PDBsum" id="3WG7"/>
<dbReference type="PDBsum" id="3X2Q"/>
<dbReference type="PDBsum" id="5B1A"/>
<dbReference type="PDBsum" id="5B1B"/>
<dbReference type="PDBsum" id="5B3S"/>
<dbReference type="PDBsum" id="5GPN"/>
<dbReference type="PDBsum" id="5IY5"/>
<dbReference type="PDBsum" id="5LUF"/>
<dbReference type="PDBsum" id="5W97"/>
<dbReference type="PDBsum" id="5WAU"/>
<dbReference type="PDBsum" id="5X19"/>
<dbReference type="PDBsum" id="5X1B"/>
<dbReference type="PDBsum" id="5X1F"/>
<dbReference type="PDBsum" id="5XDQ"/>
<dbReference type="PDBsum" id="5XDX"/>
<dbReference type="PDBsum" id="5XTH"/>
<dbReference type="PDBsum" id="5XTI"/>
<dbReference type="PDBsum" id="5Z84"/>
<dbReference type="PDBsum" id="5Z85"/>
<dbReference type="PDBsum" id="5Z86"/>
<dbReference type="PDBsum" id="5ZCO"/>
<dbReference type="PDBsum" id="5ZCP"/>
<dbReference type="PDBsum" id="5ZCQ"/>
<dbReference type="PDBsum" id="6J8M"/>
<dbReference type="PDBsum" id="6JUW"/>
<dbReference type="PDBsum" id="6JY3"/>
<dbReference type="PDBsum" id="6JY4"/>
<dbReference type="PDBsum" id="6NKN"/>
<dbReference type="PDBsum" id="6NMF"/>
<dbReference type="PDBsum" id="6NMP"/>
<dbReference type="PDBsum" id="7COH"/>
<dbReference type="PDBsum" id="7CP5"/>
<dbReference type="PDBsum" id="7D5W"/>
<dbReference type="PDBsum" id="7D5X"/>
<dbReference type="PDBsum" id="7DGQ"/>
<dbReference type="PDBsum" id="7DGR"/>
<dbReference type="PDBsum" id="7DGS"/>
<dbReference type="PDBsum" id="7DKF"/>
<dbReference type="PDBsum" id="7EV7"/>
<dbReference type="PDBsum" id="7THU"/>
<dbReference type="PDBsum" id="7TIE"/>
<dbReference type="PDBsum" id="7TIH"/>
<dbReference type="PDBsum" id="7TII"/>
<dbReference type="PDBsum" id="7VUW"/>
<dbReference type="PDBsum" id="7VVR"/>
<dbReference type="PDBsum" id="7W3E"/>
<dbReference type="PDBsum" id="7XMA"/>
<dbReference type="PDBsum" id="7XMB"/>
<dbReference type="PDBsum" id="7Y44"/>
<dbReference type="PDBsum" id="7YPY"/>
<dbReference type="PDBsum" id="8D4T"/>
<dbReference type="PDBsum" id="8GBT"/>
<dbReference type="PDBsum" id="8GCQ"/>
<dbReference type="PDBsum" id="8GVM"/>
<dbReference type="PDBsum" id="8H8R"/>
<dbReference type="PDBsum" id="8H8S"/>
<dbReference type="PDBsum" id="8IJN"/>
<dbReference type="EMDB" id="EMD-27196"/>
<dbReference type="EMDB" id="EMD-30673"/>
<dbReference type="EMDB" id="EMD-30674"/>
<dbReference type="EMDB" id="EMD-30675"/>
<dbReference type="EMDB" id="EMD-30706"/>
<dbReference type="EMDB" id="EMD-4107"/>
<dbReference type="EMDB" id="EMD-9534"/>
<dbReference type="SMR" id="P13183"/>
<dbReference type="CORUM" id="P13183"/>
<dbReference type="DIP" id="DIP-60939N"/>
<dbReference type="FunCoup" id="P13183">
    <property type="interactions" value="316"/>
</dbReference>
<dbReference type="IntAct" id="P13183">
    <property type="interactions" value="1"/>
</dbReference>
<dbReference type="STRING" id="9913.ENSBTAP00000041017"/>
<dbReference type="PaxDb" id="9913-ENSBTAP00000041017"/>
<dbReference type="GeneID" id="100300550"/>
<dbReference type="KEGG" id="bta:100300550"/>
<dbReference type="CTD" id="1349"/>
<dbReference type="eggNOG" id="ENOG502S9DG">
    <property type="taxonomic scope" value="Eukaryota"/>
</dbReference>
<dbReference type="HOGENOM" id="CLU_172656_0_0_1"/>
<dbReference type="InParanoid" id="P13183"/>
<dbReference type="OrthoDB" id="9937520at2759"/>
<dbReference type="TreeFam" id="TF105068"/>
<dbReference type="BRENDA" id="7.1.1.9">
    <property type="organism ID" value="908"/>
</dbReference>
<dbReference type="UniPathway" id="UPA00705"/>
<dbReference type="EvolutionaryTrace" id="P13183"/>
<dbReference type="Proteomes" id="UP000009136">
    <property type="component" value="Unplaced"/>
</dbReference>
<dbReference type="GO" id="GO:0005743">
    <property type="term" value="C:mitochondrial inner membrane"/>
    <property type="evidence" value="ECO:0007669"/>
    <property type="project" value="UniProtKB-SubCell"/>
</dbReference>
<dbReference type="GO" id="GO:0005739">
    <property type="term" value="C:mitochondrion"/>
    <property type="evidence" value="ECO:0000318"/>
    <property type="project" value="GO_Central"/>
</dbReference>
<dbReference type="GO" id="GO:0045277">
    <property type="term" value="C:respiratory chain complex IV"/>
    <property type="evidence" value="ECO:0000314"/>
    <property type="project" value="UniProtKB"/>
</dbReference>
<dbReference type="GO" id="GO:0007417">
    <property type="term" value="P:central nervous system development"/>
    <property type="evidence" value="ECO:0000250"/>
    <property type="project" value="UniProtKB"/>
</dbReference>
<dbReference type="GO" id="GO:0006123">
    <property type="term" value="P:mitochondrial electron transport, cytochrome c to oxygen"/>
    <property type="evidence" value="ECO:0007669"/>
    <property type="project" value="InterPro"/>
</dbReference>
<dbReference type="CDD" id="cd01403">
    <property type="entry name" value="Cyt_c_Oxidase_VIIb"/>
    <property type="match status" value="1"/>
</dbReference>
<dbReference type="DisProt" id="DP00828"/>
<dbReference type="FunFam" id="4.10.51.10:FF:000001">
    <property type="entry name" value="Cytochrome c oxidase subunit 7B, mitochondrial"/>
    <property type="match status" value="1"/>
</dbReference>
<dbReference type="Gene3D" id="4.10.51.10">
    <property type="entry name" value="Cytochrome C Oxidase, chain K"/>
    <property type="match status" value="1"/>
</dbReference>
<dbReference type="InterPro" id="IPR008433">
    <property type="entry name" value="Cyt_c_oxidase_suVIIB"/>
</dbReference>
<dbReference type="InterPro" id="IPR023272">
    <property type="entry name" value="Cyt_c_oxidase_suVIIB_dom_sf"/>
</dbReference>
<dbReference type="PANTHER" id="PTHR16716">
    <property type="entry name" value="CYTOCHROME C OXIDASE SUBUNIT 7B, MITOCHONDRIAL"/>
    <property type="match status" value="1"/>
</dbReference>
<dbReference type="PANTHER" id="PTHR16716:SF0">
    <property type="entry name" value="CYTOCHROME C OXIDASE SUBUNIT 7B, MITOCHONDRIAL"/>
    <property type="match status" value="1"/>
</dbReference>
<dbReference type="Pfam" id="PF05392">
    <property type="entry name" value="COX7B"/>
    <property type="match status" value="1"/>
</dbReference>
<dbReference type="SUPFAM" id="SSF81423">
    <property type="entry name" value="Mitochondrial cytochrome c oxidase subunit VIIb"/>
    <property type="match status" value="1"/>
</dbReference>